<name>FLOWR_DROPE</name>
<dbReference type="EMBL" id="CH479188">
    <property type="protein sequence ID" value="EDW40373.1"/>
    <property type="status" value="ALT_SEQ"/>
    <property type="molecule type" value="Genomic_DNA"/>
</dbReference>
<dbReference type="RefSeq" id="XP_002021217.1">
    <property type="nucleotide sequence ID" value="XM_002021181.1"/>
</dbReference>
<dbReference type="SMR" id="B4GRI8"/>
<dbReference type="EnsemblMetazoa" id="FBtr0190545">
    <property type="protein sequence ID" value="FBpp0189037"/>
    <property type="gene ID" value="FBgn0162517"/>
</dbReference>
<dbReference type="EnsemblMetazoa" id="XM_026989795.1">
    <property type="protein sequence ID" value="XP_026845596.1"/>
    <property type="gene ID" value="LOC6596060"/>
</dbReference>
<dbReference type="eggNOG" id="KOG4085">
    <property type="taxonomic scope" value="Eukaryota"/>
</dbReference>
<dbReference type="OrthoDB" id="9934994at2759"/>
<dbReference type="Proteomes" id="UP000008744">
    <property type="component" value="Unassembled WGS sequence"/>
</dbReference>
<dbReference type="GO" id="GO:0042995">
    <property type="term" value="C:cell projection"/>
    <property type="evidence" value="ECO:0007669"/>
    <property type="project" value="UniProtKB-KW"/>
</dbReference>
<dbReference type="GO" id="GO:0005768">
    <property type="term" value="C:endosome"/>
    <property type="evidence" value="ECO:0007669"/>
    <property type="project" value="UniProtKB-SubCell"/>
</dbReference>
<dbReference type="GO" id="GO:0042734">
    <property type="term" value="C:presynaptic membrane"/>
    <property type="evidence" value="ECO:0007669"/>
    <property type="project" value="UniProtKB-SubCell"/>
</dbReference>
<dbReference type="GO" id="GO:0030672">
    <property type="term" value="C:synaptic vesicle membrane"/>
    <property type="evidence" value="ECO:0000250"/>
    <property type="project" value="UniProtKB"/>
</dbReference>
<dbReference type="GO" id="GO:0005262">
    <property type="term" value="F:calcium channel activity"/>
    <property type="evidence" value="ECO:0007669"/>
    <property type="project" value="UniProtKB-KW"/>
</dbReference>
<dbReference type="GO" id="GO:0042802">
    <property type="term" value="F:identical protein binding"/>
    <property type="evidence" value="ECO:0007669"/>
    <property type="project" value="EnsemblMetazoa"/>
</dbReference>
<dbReference type="GO" id="GO:0150008">
    <property type="term" value="P:bulk synaptic vesicle endocytosis"/>
    <property type="evidence" value="ECO:0007669"/>
    <property type="project" value="EnsemblMetazoa"/>
</dbReference>
<dbReference type="GO" id="GO:0035212">
    <property type="term" value="P:cell competition in a multicellular organism"/>
    <property type="evidence" value="ECO:0007669"/>
    <property type="project" value="EnsemblMetazoa"/>
</dbReference>
<dbReference type="GO" id="GO:0150007">
    <property type="term" value="P:clathrin-dependent synaptic vesicle endocytosis"/>
    <property type="evidence" value="ECO:0007669"/>
    <property type="project" value="EnsemblMetazoa"/>
</dbReference>
<dbReference type="GO" id="GO:0046530">
    <property type="term" value="P:photoreceptor cell differentiation"/>
    <property type="evidence" value="ECO:0000250"/>
    <property type="project" value="UniProtKB"/>
</dbReference>
<dbReference type="GO" id="GO:0043525">
    <property type="term" value="P:positive regulation of neuron apoptotic process"/>
    <property type="evidence" value="ECO:0007669"/>
    <property type="project" value="EnsemblMetazoa"/>
</dbReference>
<dbReference type="GO" id="GO:0099533">
    <property type="term" value="P:positive regulation of presynaptic cytosolic calcium concentration"/>
    <property type="evidence" value="ECO:0007669"/>
    <property type="project" value="EnsemblMetazoa"/>
</dbReference>
<dbReference type="GO" id="GO:0048488">
    <property type="term" value="P:synaptic vesicle endocytosis"/>
    <property type="evidence" value="ECO:0000250"/>
    <property type="project" value="UniProtKB"/>
</dbReference>
<dbReference type="InterPro" id="IPR019365">
    <property type="entry name" value="TVP18/Ca-channel_flower"/>
</dbReference>
<dbReference type="PANTHER" id="PTHR13314">
    <property type="entry name" value="CALCIUM CHANNEL FLOWER HOMOLOG"/>
    <property type="match status" value="1"/>
</dbReference>
<dbReference type="PANTHER" id="PTHR13314:SF2">
    <property type="entry name" value="CALCIUM CHANNEL FLOWER HOMOLOG"/>
    <property type="match status" value="1"/>
</dbReference>
<dbReference type="Pfam" id="PF10233">
    <property type="entry name" value="Cg6151-P"/>
    <property type="match status" value="1"/>
</dbReference>
<dbReference type="SMART" id="SM01077">
    <property type="entry name" value="Cg6151-P"/>
    <property type="match status" value="1"/>
</dbReference>
<reference evidence="4" key="1">
    <citation type="journal article" date="2007" name="Nature">
        <title>Evolution of genes and genomes on the Drosophila phylogeny.</title>
        <authorList>
            <consortium name="Drosophila 12 genomes consortium"/>
        </authorList>
    </citation>
    <scope>NUCLEOTIDE SEQUENCE [LARGE SCALE GENOMIC DNA]</scope>
    <source>
        <strain>MSH-3 / Tucson 14011-0111.49</strain>
    </source>
</reference>
<organism>
    <name type="scientific">Drosophila persimilis</name>
    <name type="common">Fruit fly</name>
    <dbReference type="NCBI Taxonomy" id="7234"/>
    <lineage>
        <taxon>Eukaryota</taxon>
        <taxon>Metazoa</taxon>
        <taxon>Ecdysozoa</taxon>
        <taxon>Arthropoda</taxon>
        <taxon>Hexapoda</taxon>
        <taxon>Insecta</taxon>
        <taxon>Pterygota</taxon>
        <taxon>Neoptera</taxon>
        <taxon>Endopterygota</taxon>
        <taxon>Diptera</taxon>
        <taxon>Brachycera</taxon>
        <taxon>Muscomorpha</taxon>
        <taxon>Ephydroidea</taxon>
        <taxon>Drosophilidae</taxon>
        <taxon>Drosophila</taxon>
        <taxon>Sophophora</taxon>
    </lineage>
</organism>
<accession>B4GRI8</accession>
<evidence type="ECO:0000250" key="1">
    <source>
        <dbReference type="UniProtKB" id="Q95T12"/>
    </source>
</evidence>
<evidence type="ECO:0000255" key="2"/>
<evidence type="ECO:0000305" key="3"/>
<evidence type="ECO:0000312" key="4">
    <source>
        <dbReference type="EMBL" id="EDW40373.1"/>
    </source>
</evidence>
<sequence length="198" mass="20757">MSFAEKITGLLARPNQQDPVGGPEQPWYLKYGSRLLGIVAAFFAILFGLWNVLSIITLSVSCLVAGIIQMIAGFIVMVLEAPCCFVCIEQVNGIADKVDAKPMYFRAGLYCALAVPPIFMCFGLASLFGSGLIFATGAVYAMMALGKKASAEDMRAAAQQTGYGGNGTAASTTNDRAGIVNNAQPFSFTGAVGTDSNV</sequence>
<gene>
    <name evidence="1" type="primary">flower</name>
    <name type="ORF">GL24930</name>
</gene>
<proteinExistence type="inferred from homology"/>
<comment type="function">
    <text evidence="1">Transmembrane protein which mediates synaptic endocytosis, fitness-based cell culling, neuronal culling, morphogen gradient scaling, and calcium transport. Regulates synaptic endocytosis and hence couples exo- with endocytosis. Controls two major modes of synaptic vesicle (SV) endocytosis in the synaptic boutons of neuromuscular junctions (NMJs); Ca(2+) channel-independent Clathrin-mediated endocytosis (CME) in response to mild stimulation, and Ca(2+) channel-dependent activity-dependent bulk endocytosis (ADBE) in response to strong stimulation. Functions in ADBE and subsequent SV reformation from bulk endosomes by initiating Ca(2+) channel-dependent phosphatidylinositol 4,5-bisphosphate (PtdIns(4,5)P2) compartmentalization in synaptic boutons. There it acts at the periactive zone to provide the low Ca(2+) levels required to initiate Calcineurin activation and upregulate PtdIns(4,5)P2. Conversely PtdIns(4,5)P2 enhances fwe Ca(2+) channel-activity, establishing a positive feedback loop that induces PtdIns(4,5)P2 microdomain at the periactive zone. These microdomains trigger bulk membrane invagination (i.e. ADBE) by triggering actin polymerization while also promoting localization of fwe to bulk endosomes, thereby removing the ADBE trigger to reduce endocytosis and prevent excess membrane uptake. PtdIns(4,5)P2 then promotes SV reformation from the bulk endosomes, to coordinate ADBE and subsequent SV reformation. Different combinations of the flower isoforms at the cell membrane are also required for the identification and elimination of suboptimal or supernumerary cells during development, regeneration, and adulthood. Required for the recognition and elimination of unfit cells in the developing wing during cell competition. In the developing pupal retina, mediates the elimination of unwanted postmitotic neurons, including supernumerary photoreceptor neurons that form at the periphery of the retina and are contained within incomplete ommatidia units. Also required for efficient elimination and replacement of old neurons by newly generated neurons during regeneration in the adult brain following mechanical injury. Downstream of the flower fitness fingerprints, cells identified as unwanted or unfit are eliminated via apoptosis through the expression of ahuizotl (azot). However, the cells marked for elimination by the flower isoforms only undergo apoptosis if additional thresholds are met; (1) their neighboring fit/healthy cells express different levels of the fwe isoforms, and (2) the levels of the protective signal SPARC expressed by the loser or unwanted cells are unable to inhibit caspase activation. These additional thresholds for flower-mediated apoptosis, allows useful cells to recover from transient and limited stress before they are unnecessarily eliminated. Functions with dally and magu in a mechanism of scaling, which utilises apoptosis to ensure that the dpp morphogen gradient, which mediates organ growth, remains proportional to the size of the growing wing. In this mechanism, fwe represses dally- and Magu-dependent activity in expanding the gradient, and dally/Magu inhibits fwe-dependent apoptosis to keep cell death rate low. When the levels of these different proteins are optimally regulated the gradient correctly scales with organ growth but when this fails, fwe-mediated apoptosis is activated to trim the developing tissue to match the correct size of the gradient.</text>
</comment>
<comment type="activity regulation">
    <text evidence="1">Channel activity is inhibited by La(3+), which reduces Ca(2+) influx and thus inhibits it's function in promoting activity-dependent bulk endocytosis (ADBE) in response to high stimuli.</text>
</comment>
<comment type="subunit">
    <text evidence="1">Homomultimer. Associates with the dally/ magu complex.</text>
</comment>
<comment type="subcellular location">
    <subcellularLocation>
        <location evidence="2">Cell membrane</location>
        <topology evidence="2">Multi-pass membrane protein</topology>
    </subcellularLocation>
    <subcellularLocation>
        <location evidence="1">Cytoplasmic vesicle</location>
        <location evidence="1">Secretory vesicle</location>
        <location evidence="1">Synaptic vesicle membrane</location>
        <topology evidence="1">Multi-pass membrane protein</topology>
    </subcellularLocation>
    <subcellularLocation>
        <location evidence="1">Presynaptic cell membrane</location>
    </subcellularLocation>
    <subcellularLocation>
        <location evidence="1">Endosome</location>
    </subcellularLocation>
    <text evidence="1">Upon fusion of the synaptic vesicle (SV) with the presynaptic membrane, protein transfers from the SV to the periactive zones where endocytosis is known to occur. Upon high K(+) stimulation, expression levels in NMJ boutons are higher in bulk endosomes than in synaptic vesicles, suggesting that it is recycled to bulk endosomes after it activates ADBE.</text>
</comment>
<comment type="similarity">
    <text evidence="3">Belongs to the calcium channel flower family.</text>
</comment>
<comment type="sequence caution" evidence="3">
    <conflict type="erroneous gene model prediction">
        <sequence resource="EMBL-CDS" id="EDW40373"/>
    </conflict>
</comment>
<keyword id="KW-0106">Calcium</keyword>
<keyword id="KW-0107">Calcium channel</keyword>
<keyword id="KW-0109">Calcium transport</keyword>
<keyword id="KW-1003">Cell membrane</keyword>
<keyword id="KW-0966">Cell projection</keyword>
<keyword id="KW-0968">Cytoplasmic vesicle</keyword>
<keyword id="KW-0254">Endocytosis</keyword>
<keyword id="KW-0967">Endosome</keyword>
<keyword id="KW-0407">Ion channel</keyword>
<keyword id="KW-0406">Ion transport</keyword>
<keyword id="KW-0472">Membrane</keyword>
<keyword id="KW-1185">Reference proteome</keyword>
<keyword id="KW-0770">Synapse</keyword>
<keyword id="KW-0812">Transmembrane</keyword>
<keyword id="KW-1133">Transmembrane helix</keyword>
<keyword id="KW-0813">Transport</keyword>
<protein>
    <recommendedName>
        <fullName evidence="1">Calcium channel flower</fullName>
    </recommendedName>
</protein>
<feature type="chain" id="PRO_0000389236" description="Calcium channel flower">
    <location>
        <begin position="1"/>
        <end position="198"/>
    </location>
</feature>
<feature type="transmembrane region" description="Helical" evidence="2">
    <location>
        <begin position="36"/>
        <end position="56"/>
    </location>
</feature>
<feature type="transmembrane region" description="Helical" evidence="2">
    <location>
        <begin position="67"/>
        <end position="89"/>
    </location>
</feature>
<feature type="transmembrane region" description="Helical" evidence="2">
    <location>
        <begin position="114"/>
        <end position="134"/>
    </location>
</feature>
<feature type="site" description="Calcium ion selectivity" evidence="1">
    <location>
        <position position="80"/>
    </location>
</feature>